<organism>
    <name type="scientific">Musca domestica</name>
    <name type="common">House fly</name>
    <dbReference type="NCBI Taxonomy" id="7370"/>
    <lineage>
        <taxon>Eukaryota</taxon>
        <taxon>Metazoa</taxon>
        <taxon>Ecdysozoa</taxon>
        <taxon>Arthropoda</taxon>
        <taxon>Hexapoda</taxon>
        <taxon>Insecta</taxon>
        <taxon>Pterygota</taxon>
        <taxon>Neoptera</taxon>
        <taxon>Endopterygota</taxon>
        <taxon>Diptera</taxon>
        <taxon>Brachycera</taxon>
        <taxon>Muscomorpha</taxon>
        <taxon>Muscoidea</taxon>
        <taxon>Muscidae</taxon>
        <taxon>Musca</taxon>
    </lineage>
</organism>
<protein>
    <recommendedName>
        <fullName evidence="6">Male determiner protein Mdmd(II)</fullName>
    </recommendedName>
    <alternativeName>
        <fullName evidence="7">Male determiner encoded on chromosome II</fullName>
    </alternativeName>
</protein>
<accession>P0DP80</accession>
<accession>A0A1Y0AWT8</accession>
<sequence>MNATDAESRKPENKPSSESSSSGSTSGSSDGEVSSKTYFKNNKSKVLSGQREVVLEVVRDLSYTICKEAEEKLVERFPRKDGSNEMLPKEDSINTNHNYTTDSNEHPVELTTKTEECKNTEKTKKKSFVRALSKDKQLSAYRSRSRSTRLSYSGHISRTHSVEKSLSRYKTSVLRNRRTSFGHGRDSSTTKRSVSRDKDNRLRRRIGSSRSHTRSHSRFRRSEKKLPSRSPRRIRSQERRHERRRSMSSDYERIALRRSEPIKRRDKDEFFKNNKKVSGDIKKGKGNDNGTVAELEAKITERQRKSLDILTSRTGGACLTPDKLRMIQAEITDKSSAAYQSIAREALKKYIHGYINKVNVDSVAVITRKLLKDNIVRGRGVLCHSIIQAQATSPTFTHVYAAMVAIINSKFPNIGELLLKRLVIQFKRAFGCNDKTVCLTSSHFIAHLVNQRVAHEILALEILTLLIESPTDDNVEVAITFLKECGMKLTEVSSDRVGGIFELLKNILHQGKLDKRVQYMIKVLFQVRRDGFKDHQSIIESLELVEEYAQFTHLLLLEDVTYPKDILNEFRFDDQYETNEEKYKALSKNILGSHASDSDGSFGSGSNSETALSDCDKGKNEVNDKYTSGDIIDETKPNLIALRRTIYLTLNSCLDYEECAQKLMKMQLKTCQQNEFCQILLDCCAEQRTYEKFYGLLTHRICKMNKSFIEPFKEIFKDICQTTHCLDTNRLRNISKFFAHLLFTDAISWDVLDCIKLTEDEAITSRCIFIKSFFQELVEYMGLYHFNKKLKTEVLAGTLAGLFPKDNPRNIRFSINFFTSIGLGGITNELCQLLKIAPKSAPSSSSSSSLSSELSAPSDDDSSSDSENKKKHKGKNKKMTKKKNPSKKKEKTKKIVGKNKIAAKNKTIKRRTDKDNSSSKDNFLKSESSSNESISLDSLSSELFAPSSYSSSESSNDSESKEKHKGKNKKMTKKKNPSNKREKTKKKLSKNKKAPNKNTKKRMTEKDISSSESSISESKSLNCSASNQNENEKRKKRVTSKSRTKRVKMFKQCQWVDADNQRDIKRKKRAEYRYEPLVYRKRNEECLKKGAPNCRKDNYGNRQNHEISQRHDSEIKRRREERKKRHHEKNHSREYKRSKLGLCQREYFLYMCCQFYYPCTFQCLCQNCHFTFYS</sequence>
<keyword id="KW-0221">Differentiation</keyword>
<keyword id="KW-0507">mRNA processing</keyword>
<keyword id="KW-0508">mRNA splicing</keyword>
<keyword id="KW-0539">Nucleus</keyword>
<keyword id="KW-1185">Reference proteome</keyword>
<keyword id="KW-0726">Sexual differentiation</keyword>
<reference key="1">
    <citation type="journal article" date="2017" name="Science">
        <title>Male sex in houseflies is determined by Mdmd, a paralog of the generic splice factor gene CWC22.</title>
        <authorList>
            <person name="Sharma A."/>
            <person name="Heinze S.D."/>
            <person name="Wu Y."/>
            <person name="Kohlbrenner T."/>
            <person name="Morilla I."/>
            <person name="Brunner C."/>
            <person name="Wimmer E.A."/>
            <person name="van de Zande L."/>
            <person name="Robinson M.D."/>
            <person name="Beukeboom L.W."/>
            <person name="Bopp D."/>
        </authorList>
    </citation>
    <scope>NUCLEOTIDE SEQUENCE [GENOMIC DNA]</scope>
    <scope>DEVELOPMENTAL STAGE</scope>
</reference>
<proteinExistence type="evidence at transcript level"/>
<evidence type="ECO:0000250" key="1">
    <source>
        <dbReference type="UniProtKB" id="P0DP78"/>
    </source>
</evidence>
<evidence type="ECO:0000250" key="2">
    <source>
        <dbReference type="UniProtKB" id="Q9HCG8"/>
    </source>
</evidence>
<evidence type="ECO:0000255" key="3">
    <source>
        <dbReference type="PROSITE-ProRule" id="PRU00698"/>
    </source>
</evidence>
<evidence type="ECO:0000256" key="4">
    <source>
        <dbReference type="SAM" id="MobiDB-lite"/>
    </source>
</evidence>
<evidence type="ECO:0000269" key="5">
    <source>
    </source>
</evidence>
<evidence type="ECO:0000303" key="6">
    <source>
    </source>
</evidence>
<evidence type="ECO:0000305" key="7"/>
<dbReference type="EMBL" id="KY020048">
    <property type="protein sequence ID" value="ART29446.1"/>
    <property type="molecule type" value="Genomic_DNA"/>
</dbReference>
<dbReference type="SMR" id="P0DP80"/>
<dbReference type="STRING" id="7370.P0DP80"/>
<dbReference type="VEuPathDB" id="VectorBase:MDOA000598"/>
<dbReference type="VEuPathDB" id="VectorBase:MDOMA2_013059"/>
<dbReference type="Proteomes" id="UP000694905">
    <property type="component" value="Unplaced"/>
</dbReference>
<dbReference type="GO" id="GO:0071013">
    <property type="term" value="C:catalytic step 2 spliceosome"/>
    <property type="evidence" value="ECO:0007669"/>
    <property type="project" value="TreeGrafter"/>
</dbReference>
<dbReference type="GO" id="GO:0016607">
    <property type="term" value="C:nuclear speck"/>
    <property type="evidence" value="ECO:0007669"/>
    <property type="project" value="UniProtKB-SubCell"/>
</dbReference>
<dbReference type="GO" id="GO:0003723">
    <property type="term" value="F:RNA binding"/>
    <property type="evidence" value="ECO:0007669"/>
    <property type="project" value="InterPro"/>
</dbReference>
<dbReference type="GO" id="GO:0030154">
    <property type="term" value="P:cell differentiation"/>
    <property type="evidence" value="ECO:0007669"/>
    <property type="project" value="UniProtKB-KW"/>
</dbReference>
<dbReference type="GO" id="GO:0030238">
    <property type="term" value="P:male sex determination"/>
    <property type="evidence" value="ECO:0000250"/>
    <property type="project" value="UniProtKB"/>
</dbReference>
<dbReference type="GO" id="GO:0046661">
    <property type="term" value="P:male sex differentiation"/>
    <property type="evidence" value="ECO:0000250"/>
    <property type="project" value="UniProtKB"/>
</dbReference>
<dbReference type="GO" id="GO:0000398">
    <property type="term" value="P:mRNA splicing, via spliceosome"/>
    <property type="evidence" value="ECO:0007669"/>
    <property type="project" value="TreeGrafter"/>
</dbReference>
<dbReference type="GO" id="GO:0048024">
    <property type="term" value="P:regulation of mRNA splicing, via spliceosome"/>
    <property type="evidence" value="ECO:0000250"/>
    <property type="project" value="UniProtKB"/>
</dbReference>
<dbReference type="FunFam" id="1.25.40.180:FF:000004">
    <property type="entry name" value="pre-mRNA-splicing factor CWC22 homolog"/>
    <property type="match status" value="1"/>
</dbReference>
<dbReference type="Gene3D" id="1.25.40.180">
    <property type="match status" value="1"/>
</dbReference>
<dbReference type="InterPro" id="IPR016024">
    <property type="entry name" value="ARM-type_fold"/>
</dbReference>
<dbReference type="InterPro" id="IPR050781">
    <property type="entry name" value="CWC22_splicing_factor"/>
</dbReference>
<dbReference type="InterPro" id="IPR003891">
    <property type="entry name" value="Initiation_fac_eIF4g_MI"/>
</dbReference>
<dbReference type="InterPro" id="IPR003890">
    <property type="entry name" value="MIF4G-like_typ-3"/>
</dbReference>
<dbReference type="PANTHER" id="PTHR18034">
    <property type="entry name" value="CELL CYCLE CONTROL PROTEIN CWF22-RELATED"/>
    <property type="match status" value="1"/>
</dbReference>
<dbReference type="PANTHER" id="PTHR18034:SF3">
    <property type="entry name" value="PRE-MRNA-SPLICING FACTOR CWC22 HOMOLOG"/>
    <property type="match status" value="1"/>
</dbReference>
<dbReference type="Pfam" id="PF02847">
    <property type="entry name" value="MA3"/>
    <property type="match status" value="1"/>
</dbReference>
<dbReference type="SMART" id="SM00544">
    <property type="entry name" value="MA3"/>
    <property type="match status" value="1"/>
</dbReference>
<dbReference type="SMART" id="SM00543">
    <property type="entry name" value="MIF4G"/>
    <property type="match status" value="1"/>
</dbReference>
<dbReference type="SUPFAM" id="SSF48371">
    <property type="entry name" value="ARM repeat"/>
    <property type="match status" value="1"/>
</dbReference>
<dbReference type="PROSITE" id="PS51366">
    <property type="entry name" value="MI"/>
    <property type="match status" value="1"/>
</dbReference>
<feature type="chain" id="PRO_0000441321" description="Male determiner protein Mdmd(II)">
    <location>
        <begin position="1"/>
        <end position="1174"/>
    </location>
</feature>
<feature type="domain" description="MIF4G" evidence="3">
    <location>
        <begin position="348"/>
        <end position="531"/>
    </location>
</feature>
<feature type="domain" description="MI" evidence="3">
    <location>
        <begin position="641"/>
        <end position="757"/>
    </location>
</feature>
<feature type="region of interest" description="Disordered" evidence="4">
    <location>
        <begin position="1"/>
        <end position="51"/>
    </location>
</feature>
<feature type="region of interest" description="Disordered" evidence="4">
    <location>
        <begin position="80"/>
        <end position="109"/>
    </location>
</feature>
<feature type="region of interest" description="Disordered" evidence="4">
    <location>
        <begin position="136"/>
        <end position="259"/>
    </location>
</feature>
<feature type="region of interest" description="Disordered" evidence="4">
    <location>
        <begin position="597"/>
        <end position="616"/>
    </location>
</feature>
<feature type="region of interest" description="Disordered" evidence="4">
    <location>
        <begin position="840"/>
        <end position="1045"/>
    </location>
</feature>
<feature type="region of interest" description="Disordered" evidence="4">
    <location>
        <begin position="1095"/>
        <end position="1133"/>
    </location>
</feature>
<feature type="compositionally biased region" description="Basic and acidic residues" evidence="4">
    <location>
        <begin position="1"/>
        <end position="15"/>
    </location>
</feature>
<feature type="compositionally biased region" description="Low complexity" evidence="4">
    <location>
        <begin position="16"/>
        <end position="35"/>
    </location>
</feature>
<feature type="compositionally biased region" description="Polar residues" evidence="4">
    <location>
        <begin position="36"/>
        <end position="47"/>
    </location>
</feature>
<feature type="compositionally biased region" description="Basic and acidic residues" evidence="4">
    <location>
        <begin position="80"/>
        <end position="92"/>
    </location>
</feature>
<feature type="compositionally biased region" description="Polar residues" evidence="4">
    <location>
        <begin position="93"/>
        <end position="102"/>
    </location>
</feature>
<feature type="compositionally biased region" description="Low complexity" evidence="4">
    <location>
        <begin position="138"/>
        <end position="153"/>
    </location>
</feature>
<feature type="compositionally biased region" description="Basic and acidic residues" evidence="4">
    <location>
        <begin position="183"/>
        <end position="200"/>
    </location>
</feature>
<feature type="compositionally biased region" description="Basic residues" evidence="4">
    <location>
        <begin position="201"/>
        <end position="223"/>
    </location>
</feature>
<feature type="compositionally biased region" description="Basic and acidic residues" evidence="4">
    <location>
        <begin position="235"/>
        <end position="259"/>
    </location>
</feature>
<feature type="compositionally biased region" description="Low complexity" evidence="4">
    <location>
        <begin position="597"/>
        <end position="608"/>
    </location>
</feature>
<feature type="compositionally biased region" description="Low complexity" evidence="4">
    <location>
        <begin position="840"/>
        <end position="857"/>
    </location>
</feature>
<feature type="compositionally biased region" description="Basic residues" evidence="4">
    <location>
        <begin position="869"/>
        <end position="909"/>
    </location>
</feature>
<feature type="compositionally biased region" description="Basic and acidic residues" evidence="4">
    <location>
        <begin position="910"/>
        <end position="924"/>
    </location>
</feature>
<feature type="compositionally biased region" description="Low complexity" evidence="4">
    <location>
        <begin position="926"/>
        <end position="957"/>
    </location>
</feature>
<feature type="compositionally biased region" description="Basic residues" evidence="4">
    <location>
        <begin position="963"/>
        <end position="1001"/>
    </location>
</feature>
<feature type="compositionally biased region" description="Low complexity" evidence="4">
    <location>
        <begin position="1010"/>
        <end position="1020"/>
    </location>
</feature>
<feature type="compositionally biased region" description="Basic residues" evidence="4">
    <location>
        <begin position="1034"/>
        <end position="1045"/>
    </location>
</feature>
<feature type="compositionally biased region" description="Basic and acidic residues" evidence="4">
    <location>
        <begin position="1095"/>
        <end position="1118"/>
    </location>
</feature>
<feature type="compositionally biased region" description="Basic residues" evidence="4">
    <location>
        <begin position="1119"/>
        <end position="1130"/>
    </location>
</feature>
<gene>
    <name evidence="6" type="primary">Mdmd</name>
</gene>
<comment type="function">
    <text evidence="1 2">Male determiner protein (M-factor) that controls male somatic sexual differentiation. Acts as a dominant factor that regulates the mRNA splicing of transformer (tra) and doublesex (dsx) transcripts and promotes expression of male splice forms of tra and dsx (By similarity). Probably acts as a component of the spliceosome C complex required for mRNA splicing factor and exon-junction complex (EJC) assembly (By similarity). Hinders eIF4AIII from non-specifically binding RNA and escorts it to the splicing machinery to promote EJC assembly on mature mRNAs (By similarity).</text>
</comment>
<comment type="subunit">
    <text evidence="2">Component of the spliceosome C complex.</text>
</comment>
<comment type="subcellular location">
    <subcellularLocation>
        <location evidence="2">Nucleus speckle</location>
    </subcellularLocation>
</comment>
<comment type="developmental stage">
    <text evidence="5">Specifically expressed in early male embryos. Zygotic expression first appears in 2- to 3-hour-old embryos (cellularized blastoderm stage). Expression is then maintained throughout male development until adulthood.</text>
</comment>
<comment type="miscellaneous">
    <text evidence="5">The M.domestica genome only codes for one male determiner Mdmd protein, which is encoded in the M region, and can be located at different loci on the genome (chromosomes II, III, V or Y). The M region contains a cluster of tandemly repeated Mdmd copies with only one intact copy: other copies are degenerate with large truncations and frameshifts and are assumed to be non-functional. The presence of multiple copies in the M region may preserve its integrity in a hostile non-recombining environment. This protein is encoded on chromosome II.</text>
</comment>
<comment type="similarity">
    <text evidence="7">Belongs to the CWC22 family.</text>
</comment>
<name>MDMII_MUSDO</name>